<gene>
    <name evidence="1" type="primary">kdpA</name>
    <name type="ordered locus">ECDH10B_0764</name>
</gene>
<organism>
    <name type="scientific">Escherichia coli (strain K12 / DH10B)</name>
    <dbReference type="NCBI Taxonomy" id="316385"/>
    <lineage>
        <taxon>Bacteria</taxon>
        <taxon>Pseudomonadati</taxon>
        <taxon>Pseudomonadota</taxon>
        <taxon>Gammaproteobacteria</taxon>
        <taxon>Enterobacterales</taxon>
        <taxon>Enterobacteriaceae</taxon>
        <taxon>Escherichia</taxon>
    </lineage>
</organism>
<sequence>MAAQGFLLIATFLLVLMVLARPLGSGLARLINDIPLPGTTGVERVLFRALGVSDREMNWKQYLCAILGLNMLGLAVLFFMLLGQHYLPLNPQQLPGLSWDLALNTAVSFVTNTNWQSYSGETTLSYFSQMAGLTVQNFLSAASGIAVIFALIRAFTRQSMSTLGNAWVDLLRITLWVLVPVALLIALFFIQQGALQNFLPYQAVNTVEGAQQLLPMGPVASQEAIKMLGTNGGGFFNANSSHPFENPTALTNFVQMLAIFLIPTALCFAFGEVMGDRRQGRMLLWAMSVIFVICVGVVMWAEVQGNPHLLALGTDSSINMEGKESRFGVLVSSLFAVVTTAASCGAVIAMHDSFTALGGMVPMWLMQIGEVVFGGVGSGLYGMMLFVLLAVFIAGLMIGRTPEYLGKKIDVREMKLTALAILVTPTLVLMGAALAMMTDAGRSAMLNPGPHGFSEVLYAVSSAANNNGSAFAGLSANSPFWNCLLAFCMFVGRFGVIIPVMAIAGSLVSKKSQAASSGTLPTHGPLFVGLLIGTVLLVGALTFIPALALGPVAEYLS</sequence>
<name>KDPA_ECODH</name>
<reference key="1">
    <citation type="journal article" date="2008" name="J. Bacteriol.">
        <title>The complete genome sequence of Escherichia coli DH10B: insights into the biology of a laboratory workhorse.</title>
        <authorList>
            <person name="Durfee T."/>
            <person name="Nelson R."/>
            <person name="Baldwin S."/>
            <person name="Plunkett G. III"/>
            <person name="Burland V."/>
            <person name="Mau B."/>
            <person name="Petrosino J.F."/>
            <person name="Qin X."/>
            <person name="Muzny D.M."/>
            <person name="Ayele M."/>
            <person name="Gibbs R.A."/>
            <person name="Csorgo B."/>
            <person name="Posfai G."/>
            <person name="Weinstock G.M."/>
            <person name="Blattner F.R."/>
        </authorList>
    </citation>
    <scope>NUCLEOTIDE SEQUENCE [LARGE SCALE GENOMIC DNA]</scope>
    <source>
        <strain>K12 / DH10B</strain>
    </source>
</reference>
<feature type="chain" id="PRO_1000114679" description="Potassium-transporting ATPase potassium-binding subunit">
    <location>
        <begin position="1"/>
        <end position="557"/>
    </location>
</feature>
<feature type="transmembrane region" description="Helical" evidence="1">
    <location>
        <begin position="5"/>
        <end position="25"/>
    </location>
</feature>
<feature type="transmembrane region" description="Helical" evidence="1">
    <location>
        <begin position="63"/>
        <end position="83"/>
    </location>
</feature>
<feature type="transmembrane region" description="Helical" evidence="1">
    <location>
        <begin position="132"/>
        <end position="152"/>
    </location>
</feature>
<feature type="transmembrane region" description="Helical" evidence="1">
    <location>
        <begin position="170"/>
        <end position="190"/>
    </location>
</feature>
<feature type="transmembrane region" description="Helical" evidence="1">
    <location>
        <begin position="253"/>
        <end position="273"/>
    </location>
</feature>
<feature type="transmembrane region" description="Helical" evidence="1">
    <location>
        <begin position="283"/>
        <end position="303"/>
    </location>
</feature>
<feature type="transmembrane region" description="Helical" evidence="1">
    <location>
        <begin position="329"/>
        <end position="349"/>
    </location>
</feature>
<feature type="transmembrane region" description="Helical" evidence="1">
    <location>
        <begin position="356"/>
        <end position="376"/>
    </location>
</feature>
<feature type="transmembrane region" description="Helical" evidence="1">
    <location>
        <begin position="379"/>
        <end position="399"/>
    </location>
</feature>
<feature type="transmembrane region" description="Helical" evidence="1">
    <location>
        <begin position="416"/>
        <end position="436"/>
    </location>
</feature>
<feature type="transmembrane region" description="Helical" evidence="1">
    <location>
        <begin position="484"/>
        <end position="504"/>
    </location>
</feature>
<feature type="transmembrane region" description="Helical" evidence="1">
    <location>
        <begin position="526"/>
        <end position="546"/>
    </location>
</feature>
<dbReference type="EMBL" id="CP000948">
    <property type="protein sequence ID" value="ACB01907.1"/>
    <property type="molecule type" value="Genomic_DNA"/>
</dbReference>
<dbReference type="RefSeq" id="WP_000741129.1">
    <property type="nucleotide sequence ID" value="NC_010473.1"/>
</dbReference>
<dbReference type="SMR" id="B1X6M9"/>
<dbReference type="KEGG" id="ecd:ECDH10B_0764"/>
<dbReference type="HOGENOM" id="CLU_018614_3_0_6"/>
<dbReference type="GO" id="GO:0005886">
    <property type="term" value="C:plasma membrane"/>
    <property type="evidence" value="ECO:0007669"/>
    <property type="project" value="UniProtKB-SubCell"/>
</dbReference>
<dbReference type="GO" id="GO:0008556">
    <property type="term" value="F:P-type potassium transmembrane transporter activity"/>
    <property type="evidence" value="ECO:0007669"/>
    <property type="project" value="InterPro"/>
</dbReference>
<dbReference type="GO" id="GO:0030955">
    <property type="term" value="F:potassium ion binding"/>
    <property type="evidence" value="ECO:0007669"/>
    <property type="project" value="UniProtKB-UniRule"/>
</dbReference>
<dbReference type="HAMAP" id="MF_00275">
    <property type="entry name" value="KdpA"/>
    <property type="match status" value="1"/>
</dbReference>
<dbReference type="InterPro" id="IPR004623">
    <property type="entry name" value="KdpA"/>
</dbReference>
<dbReference type="NCBIfam" id="TIGR00680">
    <property type="entry name" value="kdpA"/>
    <property type="match status" value="1"/>
</dbReference>
<dbReference type="PANTHER" id="PTHR30607">
    <property type="entry name" value="POTASSIUM-TRANSPORTING ATPASE A CHAIN"/>
    <property type="match status" value="1"/>
</dbReference>
<dbReference type="PANTHER" id="PTHR30607:SF2">
    <property type="entry name" value="POTASSIUM-TRANSPORTING ATPASE POTASSIUM-BINDING SUBUNIT"/>
    <property type="match status" value="1"/>
</dbReference>
<dbReference type="Pfam" id="PF03814">
    <property type="entry name" value="KdpA"/>
    <property type="match status" value="1"/>
</dbReference>
<dbReference type="PIRSF" id="PIRSF001294">
    <property type="entry name" value="K_ATPaseA"/>
    <property type="match status" value="1"/>
</dbReference>
<keyword id="KW-0997">Cell inner membrane</keyword>
<keyword id="KW-1003">Cell membrane</keyword>
<keyword id="KW-0406">Ion transport</keyword>
<keyword id="KW-0472">Membrane</keyword>
<keyword id="KW-0630">Potassium</keyword>
<keyword id="KW-0633">Potassium transport</keyword>
<keyword id="KW-0812">Transmembrane</keyword>
<keyword id="KW-1133">Transmembrane helix</keyword>
<keyword id="KW-0813">Transport</keyword>
<evidence type="ECO:0000255" key="1">
    <source>
        <dbReference type="HAMAP-Rule" id="MF_00275"/>
    </source>
</evidence>
<accession>B1X6M9</accession>
<comment type="function">
    <text evidence="1">Part of the high-affinity ATP-driven potassium transport (or Kdp) system, which catalyzes the hydrolysis of ATP coupled with the electrogenic transport of potassium into the cytoplasm. This subunit binds the periplasmic potassium ions and delivers the ions to the membrane domain of KdpB through an intramembrane tunnel.</text>
</comment>
<comment type="subunit">
    <text evidence="1">The system is composed of three essential subunits: KdpA, KdpB and KdpC.</text>
</comment>
<comment type="subcellular location">
    <subcellularLocation>
        <location evidence="1">Cell inner membrane</location>
        <topology evidence="1">Multi-pass membrane protein</topology>
    </subcellularLocation>
</comment>
<comment type="similarity">
    <text evidence="1">Belongs to the KdpA family.</text>
</comment>
<protein>
    <recommendedName>
        <fullName evidence="1">Potassium-transporting ATPase potassium-binding subunit</fullName>
    </recommendedName>
    <alternativeName>
        <fullName evidence="1">ATP phosphohydrolase [potassium-transporting] A chain</fullName>
    </alternativeName>
    <alternativeName>
        <fullName evidence="1">Potassium-binding and translocating subunit A</fullName>
    </alternativeName>
    <alternativeName>
        <fullName evidence="1">Potassium-translocating ATPase A chain</fullName>
    </alternativeName>
</protein>
<proteinExistence type="inferred from homology"/>